<comment type="function">
    <text evidence="1">Decarboxylates ethylmalonyl-CoA, a potentially toxic metabolite, to form butyryl-CoA, suggesting it might be involved in metabolite proofreading. Acts preferentially on (S)-ethylmalonyl-CoA but also has some activity on the (R)-isomer. Also has methylmalonyl-CoA decarboxylase activity at lower level.</text>
</comment>
<comment type="catalytic activity">
    <reaction evidence="1">
        <text>(2S)-ethylmalonyl-CoA + H(+) = butanoyl-CoA + CO2</text>
        <dbReference type="Rhea" id="RHEA:32131"/>
        <dbReference type="ChEBI" id="CHEBI:15378"/>
        <dbReference type="ChEBI" id="CHEBI:16526"/>
        <dbReference type="ChEBI" id="CHEBI:57371"/>
        <dbReference type="ChEBI" id="CHEBI:60909"/>
        <dbReference type="EC" id="4.1.1.94"/>
    </reaction>
    <physiologicalReaction direction="left-to-right" evidence="1">
        <dbReference type="Rhea" id="RHEA:32132"/>
    </physiologicalReaction>
</comment>
<comment type="catalytic activity">
    <reaction evidence="1">
        <text>(S)-methylmalonyl-CoA + H(+) = propanoyl-CoA + CO2</text>
        <dbReference type="Rhea" id="RHEA:61340"/>
        <dbReference type="ChEBI" id="CHEBI:15378"/>
        <dbReference type="ChEBI" id="CHEBI:16526"/>
        <dbReference type="ChEBI" id="CHEBI:57327"/>
        <dbReference type="ChEBI" id="CHEBI:57392"/>
        <dbReference type="EC" id="4.1.1.94"/>
    </reaction>
    <physiologicalReaction direction="left-to-right" evidence="1">
        <dbReference type="Rhea" id="RHEA:61341"/>
    </physiologicalReaction>
</comment>
<comment type="catalytic activity">
    <reaction evidence="1">
        <text>(2R)-ethylmalonyl-CoA + H(+) = butanoyl-CoA + CO2</text>
        <dbReference type="Rhea" id="RHEA:59540"/>
        <dbReference type="ChEBI" id="CHEBI:15378"/>
        <dbReference type="ChEBI" id="CHEBI:16526"/>
        <dbReference type="ChEBI" id="CHEBI:57371"/>
        <dbReference type="ChEBI" id="CHEBI:85316"/>
        <dbReference type="EC" id="4.1.1.94"/>
    </reaction>
    <physiologicalReaction direction="left-to-right" evidence="1">
        <dbReference type="Rhea" id="RHEA:59541"/>
    </physiologicalReaction>
</comment>
<comment type="subcellular location">
    <subcellularLocation>
        <location evidence="1">Cytoplasm</location>
        <location evidence="1">Cytosol</location>
    </subcellularLocation>
</comment>
<comment type="similarity">
    <text evidence="2">Belongs to the enoyl-CoA hydratase/isomerase family.</text>
</comment>
<keyword id="KW-0963">Cytoplasm</keyword>
<keyword id="KW-0456">Lyase</keyword>
<keyword id="KW-1185">Reference proteome</keyword>
<feature type="chain" id="PRO_0000416271" description="Ethylmalonyl-CoA decarboxylase">
    <location>
        <begin position="1"/>
        <end position="298"/>
    </location>
</feature>
<protein>
    <recommendedName>
        <fullName>Ethylmalonyl-CoA decarboxylase</fullName>
        <ecNumber evidence="1">4.1.1.94</ecNumber>
    </recommendedName>
    <alternativeName>
        <fullName>Enoyl-CoA hydratase domain-containing protein 1</fullName>
    </alternativeName>
    <alternativeName>
        <fullName>Methylmalonyl-CoA decarboxylase</fullName>
        <shortName>MMCD</shortName>
    </alternativeName>
</protein>
<reference key="1">
    <citation type="journal article" date="2004" name="Nature">
        <title>Sequence and comparative analysis of the chicken genome provide unique perspectives on vertebrate evolution.</title>
        <authorList>
            <person name="Hillier L.W."/>
            <person name="Miller W."/>
            <person name="Birney E."/>
            <person name="Warren W."/>
            <person name="Hardison R.C."/>
            <person name="Ponting C.P."/>
            <person name="Bork P."/>
            <person name="Burt D.W."/>
            <person name="Groenen M.A.M."/>
            <person name="Delany M.E."/>
            <person name="Dodgson J.B."/>
            <person name="Chinwalla A.T."/>
            <person name="Cliften P.F."/>
            <person name="Clifton S.W."/>
            <person name="Delehaunty K.D."/>
            <person name="Fronick C."/>
            <person name="Fulton R.S."/>
            <person name="Graves T.A."/>
            <person name="Kremitzki C."/>
            <person name="Layman D."/>
            <person name="Magrini V."/>
            <person name="McPherson J.D."/>
            <person name="Miner T.L."/>
            <person name="Minx P."/>
            <person name="Nash W.E."/>
            <person name="Nhan M.N."/>
            <person name="Nelson J.O."/>
            <person name="Oddy L.G."/>
            <person name="Pohl C.S."/>
            <person name="Randall-Maher J."/>
            <person name="Smith S.M."/>
            <person name="Wallis J.W."/>
            <person name="Yang S.-P."/>
            <person name="Romanov M.N."/>
            <person name="Rondelli C.M."/>
            <person name="Paton B."/>
            <person name="Smith J."/>
            <person name="Morrice D."/>
            <person name="Daniels L."/>
            <person name="Tempest H.G."/>
            <person name="Robertson L."/>
            <person name="Masabanda J.S."/>
            <person name="Griffin D.K."/>
            <person name="Vignal A."/>
            <person name="Fillon V."/>
            <person name="Jacobbson L."/>
            <person name="Kerje S."/>
            <person name="Andersson L."/>
            <person name="Crooijmans R.P."/>
            <person name="Aerts J."/>
            <person name="van der Poel J.J."/>
            <person name="Ellegren H."/>
            <person name="Caldwell R.B."/>
            <person name="Hubbard S.J."/>
            <person name="Grafham D.V."/>
            <person name="Kierzek A.M."/>
            <person name="McLaren S.R."/>
            <person name="Overton I.M."/>
            <person name="Arakawa H."/>
            <person name="Beattie K.J."/>
            <person name="Bezzubov Y."/>
            <person name="Boardman P.E."/>
            <person name="Bonfield J.K."/>
            <person name="Croning M.D.R."/>
            <person name="Davies R.M."/>
            <person name="Francis M.D."/>
            <person name="Humphray S.J."/>
            <person name="Scott C.E."/>
            <person name="Taylor R.G."/>
            <person name="Tickle C."/>
            <person name="Brown W.R.A."/>
            <person name="Rogers J."/>
            <person name="Buerstedde J.-M."/>
            <person name="Wilson S.A."/>
            <person name="Stubbs L."/>
            <person name="Ovcharenko I."/>
            <person name="Gordon L."/>
            <person name="Lucas S."/>
            <person name="Miller M.M."/>
            <person name="Inoko H."/>
            <person name="Shiina T."/>
            <person name="Kaufman J."/>
            <person name="Salomonsen J."/>
            <person name="Skjoedt K."/>
            <person name="Wong G.K.-S."/>
            <person name="Wang J."/>
            <person name="Liu B."/>
            <person name="Wang J."/>
            <person name="Yu J."/>
            <person name="Yang H."/>
            <person name="Nefedov M."/>
            <person name="Koriabine M."/>
            <person name="Dejong P.J."/>
            <person name="Goodstadt L."/>
            <person name="Webber C."/>
            <person name="Dickens N.J."/>
            <person name="Letunic I."/>
            <person name="Suyama M."/>
            <person name="Torrents D."/>
            <person name="von Mering C."/>
            <person name="Zdobnov E.M."/>
            <person name="Makova K."/>
            <person name="Nekrutenko A."/>
            <person name="Elnitski L."/>
            <person name="Eswara P."/>
            <person name="King D.C."/>
            <person name="Yang S.-P."/>
            <person name="Tyekucheva S."/>
            <person name="Radakrishnan A."/>
            <person name="Harris R.S."/>
            <person name="Chiaromonte F."/>
            <person name="Taylor J."/>
            <person name="He J."/>
            <person name="Rijnkels M."/>
            <person name="Griffiths-Jones S."/>
            <person name="Ureta-Vidal A."/>
            <person name="Hoffman M.M."/>
            <person name="Severin J."/>
            <person name="Searle S.M.J."/>
            <person name="Law A.S."/>
            <person name="Speed D."/>
            <person name="Waddington D."/>
            <person name="Cheng Z."/>
            <person name="Tuzun E."/>
            <person name="Eichler E."/>
            <person name="Bao Z."/>
            <person name="Flicek P."/>
            <person name="Shteynberg D.D."/>
            <person name="Brent M.R."/>
            <person name="Bye J.M."/>
            <person name="Huckle E.J."/>
            <person name="Chatterji S."/>
            <person name="Dewey C."/>
            <person name="Pachter L."/>
            <person name="Kouranov A."/>
            <person name="Mourelatos Z."/>
            <person name="Hatzigeorgiou A.G."/>
            <person name="Paterson A.H."/>
            <person name="Ivarie R."/>
            <person name="Brandstrom M."/>
            <person name="Axelsson E."/>
            <person name="Backstrom N."/>
            <person name="Berlin S."/>
            <person name="Webster M.T."/>
            <person name="Pourquie O."/>
            <person name="Reymond A."/>
            <person name="Ucla C."/>
            <person name="Antonarakis S.E."/>
            <person name="Long M."/>
            <person name="Emerson J.J."/>
            <person name="Betran E."/>
            <person name="Dupanloup I."/>
            <person name="Kaessmann H."/>
            <person name="Hinrichs A.S."/>
            <person name="Bejerano G."/>
            <person name="Furey T.S."/>
            <person name="Harte R.A."/>
            <person name="Raney B."/>
            <person name="Siepel A."/>
            <person name="Kent W.J."/>
            <person name="Haussler D."/>
            <person name="Eyras E."/>
            <person name="Castelo R."/>
            <person name="Abril J.F."/>
            <person name="Castellano S."/>
            <person name="Camara F."/>
            <person name="Parra G."/>
            <person name="Guigo R."/>
            <person name="Bourque G."/>
            <person name="Tesler G."/>
            <person name="Pevzner P.A."/>
            <person name="Smit A."/>
            <person name="Fulton L.A."/>
            <person name="Mardis E.R."/>
            <person name="Wilson R.K."/>
        </authorList>
    </citation>
    <scope>NUCLEOTIDE SEQUENCE [LARGE SCALE GENOMIC DNA]</scope>
    <source>
        <strain>Red jungle fowl</strain>
    </source>
</reference>
<gene>
    <name type="primary">ECHDC1</name>
</gene>
<organism>
    <name type="scientific">Gallus gallus</name>
    <name type="common">Chicken</name>
    <dbReference type="NCBI Taxonomy" id="9031"/>
    <lineage>
        <taxon>Eukaryota</taxon>
        <taxon>Metazoa</taxon>
        <taxon>Chordata</taxon>
        <taxon>Craniata</taxon>
        <taxon>Vertebrata</taxon>
        <taxon>Euteleostomi</taxon>
        <taxon>Archelosauria</taxon>
        <taxon>Archosauria</taxon>
        <taxon>Dinosauria</taxon>
        <taxon>Saurischia</taxon>
        <taxon>Theropoda</taxon>
        <taxon>Coelurosauria</taxon>
        <taxon>Aves</taxon>
        <taxon>Neognathae</taxon>
        <taxon>Galloanserae</taxon>
        <taxon>Galliformes</taxon>
        <taxon>Phasianidae</taxon>
        <taxon>Phasianinae</taxon>
        <taxon>Gallus</taxon>
    </lineage>
</organism>
<sequence>MAVFLWRNLFQTTKARMLQQRRASLYNGAHDYDEELIKKKLQQFAGGSINLSKEHSGIGILTLNNSRLMNAFTGTMMLELQERVTELENWKDGKGLIICGAGNTFCSGSDLNAVKAISNSQDGMNMCMFMQNTLTRLMRLPLISIALIQGKALGGGAELTTACDFRLMTPGSEIRFVHKHMGLVPGWGGAARLVRIIGSRAALQLLSRAHGVDPERALHLGLSEGTLSSSDETGSLEEARAWLSQYTEGPASVIQAVKKVVTAGRELPLEAALRTEKDVFGTVWGGPANLEALTRRQK</sequence>
<evidence type="ECO:0000250" key="1">
    <source>
        <dbReference type="UniProtKB" id="Q9D9V3"/>
    </source>
</evidence>
<evidence type="ECO:0000305" key="2"/>
<accession>F1NB38</accession>
<dbReference type="EC" id="4.1.1.94" evidence="1"/>
<dbReference type="EMBL" id="AADN02001706">
    <property type="status" value="NOT_ANNOTATED_CDS"/>
    <property type="molecule type" value="Genomic_DNA"/>
</dbReference>
<dbReference type="EMBL" id="AADN02001707">
    <property type="status" value="NOT_ANNOTATED_CDS"/>
    <property type="molecule type" value="Genomic_DNA"/>
</dbReference>
<dbReference type="EMBL" id="AADN02001708">
    <property type="status" value="NOT_ANNOTATED_CDS"/>
    <property type="molecule type" value="Genomic_DNA"/>
</dbReference>
<dbReference type="EMBL" id="AADN02001709">
    <property type="status" value="NOT_ANNOTATED_CDS"/>
    <property type="molecule type" value="Genomic_DNA"/>
</dbReference>
<dbReference type="EMBL" id="AADN02001710">
    <property type="status" value="NOT_ANNOTATED_CDS"/>
    <property type="molecule type" value="Genomic_DNA"/>
</dbReference>
<dbReference type="EMBL" id="AADN02001711">
    <property type="status" value="NOT_ANNOTATED_CDS"/>
    <property type="molecule type" value="Genomic_DNA"/>
</dbReference>
<dbReference type="EMBL" id="AADN02001712">
    <property type="status" value="NOT_ANNOTATED_CDS"/>
    <property type="molecule type" value="Genomic_DNA"/>
</dbReference>
<dbReference type="EMBL" id="AADN02001713">
    <property type="status" value="NOT_ANNOTATED_CDS"/>
    <property type="molecule type" value="Genomic_DNA"/>
</dbReference>
<dbReference type="EMBL" id="AADN02001714">
    <property type="status" value="NOT_ANNOTATED_CDS"/>
    <property type="molecule type" value="Genomic_DNA"/>
</dbReference>
<dbReference type="EMBL" id="AADN02001715">
    <property type="status" value="NOT_ANNOTATED_CDS"/>
    <property type="molecule type" value="Genomic_DNA"/>
</dbReference>
<dbReference type="EMBL" id="AADN02001716">
    <property type="status" value="NOT_ANNOTATED_CDS"/>
    <property type="molecule type" value="Genomic_DNA"/>
</dbReference>
<dbReference type="EMBL" id="AADN02001717">
    <property type="status" value="NOT_ANNOTATED_CDS"/>
    <property type="molecule type" value="Genomic_DNA"/>
</dbReference>
<dbReference type="EMBL" id="AADN02001718">
    <property type="status" value="NOT_ANNOTATED_CDS"/>
    <property type="molecule type" value="Genomic_DNA"/>
</dbReference>
<dbReference type="EMBL" id="AADN02001719">
    <property type="status" value="NOT_ANNOTATED_CDS"/>
    <property type="molecule type" value="Genomic_DNA"/>
</dbReference>
<dbReference type="EMBL" id="AADN02001720">
    <property type="status" value="NOT_ANNOTATED_CDS"/>
    <property type="molecule type" value="Genomic_DNA"/>
</dbReference>
<dbReference type="EMBL" id="AADN02001721">
    <property type="status" value="NOT_ANNOTATED_CDS"/>
    <property type="molecule type" value="Genomic_DNA"/>
</dbReference>
<dbReference type="SMR" id="F1NB38"/>
<dbReference type="FunCoup" id="F1NB38">
    <property type="interactions" value="1504"/>
</dbReference>
<dbReference type="STRING" id="9031.ENSGALP00000070409"/>
<dbReference type="PaxDb" id="9031-ENSGALP00000023891"/>
<dbReference type="VEuPathDB" id="HostDB:geneid_769021"/>
<dbReference type="eggNOG" id="KOG1680">
    <property type="taxonomic scope" value="Eukaryota"/>
</dbReference>
<dbReference type="InParanoid" id="F1NB38"/>
<dbReference type="OrthoDB" id="448450at2759"/>
<dbReference type="Proteomes" id="UP000000539">
    <property type="component" value="Unassembled WGS sequence"/>
</dbReference>
<dbReference type="GO" id="GO:0005829">
    <property type="term" value="C:cytosol"/>
    <property type="evidence" value="ECO:0000250"/>
    <property type="project" value="UniProtKB"/>
</dbReference>
<dbReference type="GO" id="GO:0016831">
    <property type="term" value="F:carboxy-lyase activity"/>
    <property type="evidence" value="ECO:0000250"/>
    <property type="project" value="UniProtKB"/>
</dbReference>
<dbReference type="GO" id="GO:0004492">
    <property type="term" value="F:methyl/ethyl malonyl-CoA decarboxylase activity"/>
    <property type="evidence" value="ECO:0007669"/>
    <property type="project" value="UniProtKB-EC"/>
</dbReference>
<dbReference type="GO" id="GO:0006635">
    <property type="term" value="P:fatty acid beta-oxidation"/>
    <property type="evidence" value="ECO:0000318"/>
    <property type="project" value="GO_Central"/>
</dbReference>
<dbReference type="CDD" id="cd06558">
    <property type="entry name" value="crotonase-like"/>
    <property type="match status" value="1"/>
</dbReference>
<dbReference type="FunFam" id="3.90.226.10:FF:000040">
    <property type="entry name" value="Ethylmalonyl-CoA decarboxylase 1"/>
    <property type="match status" value="1"/>
</dbReference>
<dbReference type="Gene3D" id="3.90.226.10">
    <property type="entry name" value="2-enoyl-CoA Hydratase, Chain A, domain 1"/>
    <property type="match status" value="1"/>
</dbReference>
<dbReference type="InterPro" id="IPR029045">
    <property type="entry name" value="ClpP/crotonase-like_dom_sf"/>
</dbReference>
<dbReference type="InterPro" id="IPR018376">
    <property type="entry name" value="Enoyl-CoA_hyd/isom_CS"/>
</dbReference>
<dbReference type="InterPro" id="IPR001753">
    <property type="entry name" value="Enoyl-CoA_hydra/iso"/>
</dbReference>
<dbReference type="PANTHER" id="PTHR11941">
    <property type="entry name" value="ENOYL-COA HYDRATASE-RELATED"/>
    <property type="match status" value="1"/>
</dbReference>
<dbReference type="PANTHER" id="PTHR11941:SF27">
    <property type="entry name" value="ETHYLMALONYL-COA DECARBOXYLASE"/>
    <property type="match status" value="1"/>
</dbReference>
<dbReference type="Pfam" id="PF00378">
    <property type="entry name" value="ECH_1"/>
    <property type="match status" value="1"/>
</dbReference>
<dbReference type="SUPFAM" id="SSF52096">
    <property type="entry name" value="ClpP/crotonase"/>
    <property type="match status" value="1"/>
</dbReference>
<dbReference type="PROSITE" id="PS00166">
    <property type="entry name" value="ENOYL_COA_HYDRATASE"/>
    <property type="match status" value="1"/>
</dbReference>
<proteinExistence type="inferred from homology"/>
<name>ECHD1_CHICK</name>